<proteinExistence type="evidence at protein level"/>
<evidence type="ECO:0000250" key="1">
    <source>
        <dbReference type="UniProtKB" id="P51692"/>
    </source>
</evidence>
<evidence type="ECO:0000255" key="2"/>
<evidence type="ECO:0000255" key="3">
    <source>
        <dbReference type="PROSITE-ProRule" id="PRU00191"/>
    </source>
</evidence>
<evidence type="ECO:0000269" key="4">
    <source>
    </source>
</evidence>
<evidence type="ECO:0000269" key="5">
    <source>
    </source>
</evidence>
<evidence type="ECO:0000269" key="6">
    <source>
    </source>
</evidence>
<evidence type="ECO:0000305" key="7"/>
<evidence type="ECO:0000312" key="8">
    <source>
        <dbReference type="WormBase" id="F58E6.1"/>
    </source>
</evidence>
<protein>
    <recommendedName>
        <fullName>Signal transducer and activator of transcription b</fullName>
    </recommendedName>
    <alternativeName>
        <fullName>Zinc finger protein STAT-B</fullName>
    </alternativeName>
</protein>
<reference evidence="7" key="1">
    <citation type="submission" date="1999-06" db="EMBL/GenBank/DDBJ databases">
        <title>STAT genes found in Caenorhabditis elegans.</title>
        <authorList>
            <person name="Liu X."/>
            <person name="Quinn A.M."/>
            <person name="Chin Y.E."/>
            <person name="Fu X."/>
        </authorList>
    </citation>
    <scope>NUCLEOTIDE SEQUENCE [MRNA]</scope>
</reference>
<reference key="2">
    <citation type="journal article" date="1998" name="Science">
        <title>Genome sequence of the nematode C. elegans: a platform for investigating biology.</title>
        <authorList>
            <consortium name="The C. elegans sequencing consortium"/>
        </authorList>
    </citation>
    <scope>NUCLEOTIDE SEQUENCE [LARGE SCALE GENOMIC DNA]</scope>
    <source>
        <strain>Bristol N2</strain>
    </source>
</reference>
<reference evidence="7" key="3">
    <citation type="journal article" date="2011" name="Cell Host Microbe">
        <title>Unusual regulation of a STAT protein by an SLC6 family transporter in C. elegans epidermal innate immunity.</title>
        <authorList>
            <person name="Dierking K."/>
            <person name="Polanowska J."/>
            <person name="Omi S."/>
            <person name="Engelmann I."/>
            <person name="Gut M."/>
            <person name="Lembo F."/>
            <person name="Ewbank J.J."/>
            <person name="Pujol N."/>
        </authorList>
    </citation>
    <scope>FUNCTION</scope>
    <scope>INTERACTION WITH SNF-12</scope>
    <scope>SUBCELLULAR LOCATION</scope>
    <scope>DEVELOPMENTAL STAGE</scope>
    <scope>DISRUPTION PHENOTYPE</scope>
</reference>
<reference key="4">
    <citation type="journal article" date="2012" name="PLoS ONE">
        <title>The pseudokinase NIPI-4 is a novel regulator of antimicrobial peptide gene expression.</title>
        <authorList>
            <person name="Labed S.A."/>
            <person name="Omi S."/>
            <person name="Gut M."/>
            <person name="Ewbank J.J."/>
            <person name="Pujol N."/>
        </authorList>
    </citation>
    <scope>FUNCTION</scope>
</reference>
<reference key="5">
    <citation type="journal article" date="2020" name="Dev. Cell">
        <title>An ECM-to-Nucleus Signaling Pathway Activates Lysosomes for C. elegans Larval Development.</title>
        <authorList>
            <person name="Miao R."/>
            <person name="Li M."/>
            <person name="Zhang Q."/>
            <person name="Yang C."/>
            <person name="Wang X."/>
        </authorList>
    </citation>
    <scope>FUNCTION</scope>
</reference>
<reference key="6">
    <citation type="journal article" date="2021" name="Curr. Biol.">
        <title>Innate Immunity Promotes Sleep through Epidermal Antimicrobial Peptides.</title>
        <authorList>
            <person name="Sinner M.P."/>
            <person name="Masurat F."/>
            <person name="Ewbank J.J."/>
            <person name="Pujol N."/>
            <person name="Bringmann H."/>
        </authorList>
    </citation>
    <scope>FUNCTION</scope>
</reference>
<name>STATB_CAEEL</name>
<dbReference type="EMBL" id="AF164113">
    <property type="protein sequence ID" value="AAD45535.1"/>
    <property type="status" value="ALT_SEQ"/>
    <property type="molecule type" value="mRNA"/>
</dbReference>
<dbReference type="EMBL" id="BX284605">
    <property type="protein sequence ID" value="CAQ35047.1"/>
    <property type="molecule type" value="Genomic_DNA"/>
</dbReference>
<dbReference type="PIR" id="T22925">
    <property type="entry name" value="T22925"/>
</dbReference>
<dbReference type="RefSeq" id="NP_001122963.1">
    <property type="nucleotide sequence ID" value="NM_001129491.3"/>
</dbReference>
<dbReference type="SMR" id="Q20977"/>
<dbReference type="BioGRID" id="532609">
    <property type="interactions" value="4"/>
</dbReference>
<dbReference type="FunCoup" id="Q20977">
    <property type="interactions" value="240"/>
</dbReference>
<dbReference type="STRING" id="6239.F58E6.1.1"/>
<dbReference type="PaxDb" id="6239-F58E6.1"/>
<dbReference type="PeptideAtlas" id="Q20977"/>
<dbReference type="EnsemblMetazoa" id="F58E6.1.1">
    <property type="protein sequence ID" value="F58E6.1.1"/>
    <property type="gene ID" value="WBGene00010251"/>
</dbReference>
<dbReference type="GeneID" id="3565291"/>
<dbReference type="KEGG" id="cel:CELE_F58E6.1"/>
<dbReference type="AGR" id="WB:WBGene00010251"/>
<dbReference type="CTD" id="3565291"/>
<dbReference type="WormBase" id="F58E6.1">
    <property type="protein sequence ID" value="CE42515"/>
    <property type="gene ID" value="WBGene00010251"/>
    <property type="gene designation" value="sta-2"/>
</dbReference>
<dbReference type="eggNOG" id="KOG1609">
    <property type="taxonomic scope" value="Eukaryota"/>
</dbReference>
<dbReference type="GeneTree" id="ENSGT01050000244905"/>
<dbReference type="HOGENOM" id="CLU_493742_0_0_1"/>
<dbReference type="InParanoid" id="Q20977"/>
<dbReference type="OMA" id="LIYPDID"/>
<dbReference type="OrthoDB" id="19300at2759"/>
<dbReference type="PhylomeDB" id="Q20977"/>
<dbReference type="Reactome" id="R-CEL-1059683">
    <property type="pathway name" value="Interleukin-6 signaling"/>
</dbReference>
<dbReference type="Reactome" id="R-CEL-1169408">
    <property type="pathway name" value="ISG15 antiviral mechanism"/>
</dbReference>
<dbReference type="Reactome" id="R-CEL-1251985">
    <property type="pathway name" value="Nuclear signaling by ERBB4"/>
</dbReference>
<dbReference type="Reactome" id="R-CEL-186763">
    <property type="pathway name" value="Downstream signal transduction"/>
</dbReference>
<dbReference type="Reactome" id="R-CEL-201556">
    <property type="pathway name" value="Signaling by ALK"/>
</dbReference>
<dbReference type="Reactome" id="R-CEL-3249367">
    <property type="pathway name" value="STAT6-mediated induction of chemokines"/>
</dbReference>
<dbReference type="Reactome" id="R-CEL-6783783">
    <property type="pathway name" value="Interleukin-10 signaling"/>
</dbReference>
<dbReference type="Reactome" id="R-CEL-6785807">
    <property type="pathway name" value="Interleukin-4 and Interleukin-13 signaling"/>
</dbReference>
<dbReference type="Reactome" id="R-CEL-877300">
    <property type="pathway name" value="Interferon gamma signaling"/>
</dbReference>
<dbReference type="Reactome" id="R-CEL-877312">
    <property type="pathway name" value="Regulation of IFNG signaling"/>
</dbReference>
<dbReference type="Reactome" id="R-CEL-8854691">
    <property type="pathway name" value="Interleukin-20 family signaling"/>
</dbReference>
<dbReference type="Reactome" id="R-CEL-8875791">
    <property type="pathway name" value="MET activates STAT3"/>
</dbReference>
<dbReference type="Reactome" id="R-CEL-8983432">
    <property type="pathway name" value="Interleukin-15 signaling"/>
</dbReference>
<dbReference type="Reactome" id="R-CEL-8984722">
    <property type="pathway name" value="Interleukin-35 Signalling"/>
</dbReference>
<dbReference type="Reactome" id="R-CEL-8985947">
    <property type="pathway name" value="Interleukin-9 signaling"/>
</dbReference>
<dbReference type="Reactome" id="R-CEL-9008059">
    <property type="pathway name" value="Interleukin-37 signaling"/>
</dbReference>
<dbReference type="Reactome" id="R-CEL-9020591">
    <property type="pathway name" value="Interleukin-12 signaling"/>
</dbReference>
<dbReference type="Reactome" id="R-CEL-9020933">
    <property type="pathway name" value="Interleukin-23 signaling"/>
</dbReference>
<dbReference type="Reactome" id="R-CEL-9020956">
    <property type="pathway name" value="Interleukin-27 signaling"/>
</dbReference>
<dbReference type="Reactome" id="R-CEL-909733">
    <property type="pathway name" value="Interferon alpha/beta signaling"/>
</dbReference>
<dbReference type="Reactome" id="R-CEL-9701898">
    <property type="pathway name" value="STAT3 nuclear events downstream of ALK signaling"/>
</dbReference>
<dbReference type="Reactome" id="R-CEL-9833482">
    <property type="pathway name" value="PKR-mediated signaling"/>
</dbReference>
<dbReference type="Reactome" id="R-CEL-9860927">
    <property type="pathway name" value="Turbulent (oscillatory, disturbed) flow shear stress activates signaling by PIEZO1 and integrins in endothelial cells"/>
</dbReference>
<dbReference type="PRO" id="PR:Q20977"/>
<dbReference type="Proteomes" id="UP000001940">
    <property type="component" value="Chromosome V"/>
</dbReference>
<dbReference type="Bgee" id="WBGene00010251">
    <property type="expression patterns" value="Expressed in larva and 3 other cell types or tissues"/>
</dbReference>
<dbReference type="GO" id="GO:0045177">
    <property type="term" value="C:apical part of cell"/>
    <property type="evidence" value="ECO:0000314"/>
    <property type="project" value="WormBase"/>
</dbReference>
<dbReference type="GO" id="GO:0005737">
    <property type="term" value="C:cytoplasm"/>
    <property type="evidence" value="ECO:0000318"/>
    <property type="project" value="GO_Central"/>
</dbReference>
<dbReference type="GO" id="GO:0030139">
    <property type="term" value="C:endocytic vesicle"/>
    <property type="evidence" value="ECO:0000314"/>
    <property type="project" value="WormBase"/>
</dbReference>
<dbReference type="GO" id="GO:0030056">
    <property type="term" value="C:hemidesmosome"/>
    <property type="evidence" value="ECO:0000314"/>
    <property type="project" value="WormBase"/>
</dbReference>
<dbReference type="GO" id="GO:0098733">
    <property type="term" value="C:hemidesmosome associated protein complex"/>
    <property type="evidence" value="ECO:0000314"/>
    <property type="project" value="WormBase"/>
</dbReference>
<dbReference type="GO" id="GO:0005634">
    <property type="term" value="C:nucleus"/>
    <property type="evidence" value="ECO:0000314"/>
    <property type="project" value="UniProtKB"/>
</dbReference>
<dbReference type="GO" id="GO:0000981">
    <property type="term" value="F:DNA-binding transcription factor activity, RNA polymerase II-specific"/>
    <property type="evidence" value="ECO:0000318"/>
    <property type="project" value="GO_Central"/>
</dbReference>
<dbReference type="GO" id="GO:0000978">
    <property type="term" value="F:RNA polymerase II cis-regulatory region sequence-specific DNA binding"/>
    <property type="evidence" value="ECO:0000318"/>
    <property type="project" value="GO_Central"/>
</dbReference>
<dbReference type="GO" id="GO:0007259">
    <property type="term" value="P:cell surface receptor signaling pathway via JAK-STAT"/>
    <property type="evidence" value="ECO:0000318"/>
    <property type="project" value="GO_Central"/>
</dbReference>
<dbReference type="GO" id="GO:0006952">
    <property type="term" value="P:defense response"/>
    <property type="evidence" value="ECO:0000318"/>
    <property type="project" value="GO_Central"/>
</dbReference>
<dbReference type="GO" id="GO:0050832">
    <property type="term" value="P:defense response to fungus"/>
    <property type="evidence" value="ECO:0000315"/>
    <property type="project" value="UniProtKB"/>
</dbReference>
<dbReference type="GO" id="GO:0002804">
    <property type="term" value="P:positive regulation of antifungal peptide production"/>
    <property type="evidence" value="ECO:0000315"/>
    <property type="project" value="WormBase"/>
</dbReference>
<dbReference type="GO" id="GO:0010628">
    <property type="term" value="P:positive regulation of gene expression"/>
    <property type="evidence" value="ECO:0000315"/>
    <property type="project" value="UniProtKB"/>
</dbReference>
<dbReference type="GO" id="GO:0042127">
    <property type="term" value="P:regulation of cell population proliferation"/>
    <property type="evidence" value="ECO:0000318"/>
    <property type="project" value="GO_Central"/>
</dbReference>
<dbReference type="GO" id="GO:0006357">
    <property type="term" value="P:regulation of transcription by RNA polymerase II"/>
    <property type="evidence" value="ECO:0000318"/>
    <property type="project" value="GO_Central"/>
</dbReference>
<dbReference type="GO" id="GO:0009611">
    <property type="term" value="P:response to wounding"/>
    <property type="evidence" value="ECO:0000315"/>
    <property type="project" value="UniProtKB"/>
</dbReference>
<dbReference type="CDD" id="cd09919">
    <property type="entry name" value="SH2_STAT_family"/>
    <property type="match status" value="1"/>
</dbReference>
<dbReference type="FunFam" id="1.10.238.10:FF:000541">
    <property type="entry name" value="CRE-STA-2 protein"/>
    <property type="match status" value="1"/>
</dbReference>
<dbReference type="FunFam" id="3.30.505.10:FF:000109">
    <property type="entry name" value="CRE-STA-2 protein"/>
    <property type="match status" value="1"/>
</dbReference>
<dbReference type="FunFam" id="2.60.40.630:FF:000006">
    <property type="entry name" value="Signal transducer and activator of transcription b"/>
    <property type="match status" value="1"/>
</dbReference>
<dbReference type="Gene3D" id="1.10.238.10">
    <property type="entry name" value="EF-hand"/>
    <property type="match status" value="1"/>
</dbReference>
<dbReference type="Gene3D" id="3.30.505.10">
    <property type="entry name" value="SH2 domain"/>
    <property type="match status" value="1"/>
</dbReference>
<dbReference type="Gene3D" id="2.60.40.630">
    <property type="entry name" value="STAT transcription factor, DNA-binding domain"/>
    <property type="match status" value="1"/>
</dbReference>
<dbReference type="InterPro" id="IPR008967">
    <property type="entry name" value="p53-like_TF_DNA-bd_sf"/>
</dbReference>
<dbReference type="InterPro" id="IPR000980">
    <property type="entry name" value="SH2"/>
</dbReference>
<dbReference type="InterPro" id="IPR036860">
    <property type="entry name" value="SH2_dom_sf"/>
</dbReference>
<dbReference type="InterPro" id="IPR001217">
    <property type="entry name" value="STAT"/>
</dbReference>
<dbReference type="InterPro" id="IPR012345">
    <property type="entry name" value="STAT_TF_DNA-bd_N"/>
</dbReference>
<dbReference type="PANTHER" id="PTHR11801">
    <property type="entry name" value="SIGNAL TRANSDUCER AND ACTIVATOR OF TRANSCRIPTION"/>
    <property type="match status" value="1"/>
</dbReference>
<dbReference type="Pfam" id="PF24629">
    <property type="entry name" value="STATB_N"/>
    <property type="match status" value="1"/>
</dbReference>
<dbReference type="SUPFAM" id="SSF49417">
    <property type="entry name" value="p53-like transcription factors"/>
    <property type="match status" value="1"/>
</dbReference>
<dbReference type="SUPFAM" id="SSF55550">
    <property type="entry name" value="SH2 domain"/>
    <property type="match status" value="1"/>
</dbReference>
<dbReference type="PROSITE" id="PS50001">
    <property type="entry name" value="SH2"/>
    <property type="match status" value="1"/>
</dbReference>
<gene>
    <name evidence="8" type="primary">sta-2</name>
    <name evidence="8" type="synonym">stat-b</name>
    <name evidence="8" type="ORF">F58E6.1</name>
</gene>
<sequence length="567" mass="65018">MSSVVSDQMDIESSSAFSPAEPVVDGAFVSKHNLSAEAYQGFKECADSLLSGKIAQNEQLPFIQRTLQICENVILNFEDEKQHLMSDVLLVWAMKQQKLSIATLHTQQLHYKELDLINLQFEYFGELLQQTLSGLDYLKQYYPNVGFEEVHSKVRNLTHYFLYYSIIVSRQPPSVIVKCGEAENHRRSRFWFNTEIRILGGSAFGIDTNNENSNVNCYLITDETAKQLLNNAYLDIFESEEFCIEPNTSTFQKKDARGIKAKFDDMKVAKKVALRRDSVATKRYCLCYNIQLQTNCGIELVGKKVSLPFAVLVGPKADVEAKLFLERSFADLVRHPLSDIPTHVSCAEMADALEMKFQAIIETPQKNTDGPSVVQPRKFNMQTKQHLVMRMKPNNQGFLPLDNFMKLPVAEEFQHKKSASAEGDWKLVPFYDWFFKLAEITNKYLYSMWYDGLVYGFCSKEDAENILRCIPRSVLLVRFSDIEYGKIKISVKNRNGEIRHHWYEHADLNARSLNSELLSNHKFSDVDLIYPDIDLEVALGGRNKPRIRLPRNLAPDEIYFDNQGAAT</sequence>
<keyword id="KW-0010">Activator</keyword>
<keyword id="KW-0963">Cytoplasm</keyword>
<keyword id="KW-0217">Developmental protein</keyword>
<keyword id="KW-0238">DNA-binding</keyword>
<keyword id="KW-0539">Nucleus</keyword>
<keyword id="KW-0597">Phosphoprotein</keyword>
<keyword id="KW-1185">Reference proteome</keyword>
<keyword id="KW-0727">SH2 domain</keyword>
<keyword id="KW-0804">Transcription</keyword>
<keyword id="KW-0805">Transcription regulation</keyword>
<comment type="function">
    <text evidence="1 4 5 6">Carries out a dual function: signal transduction and activation of transcription (By similarity). Required, in concert with transcription factor elt-3, for up-regulation of the vacuolar H(+)-ATPase and acceleration of lysosome maturation at molt (PubMed:31735670). As part of the innate immune response to molting and injury of the adult epidermis, positively regulates the expression of epidermal antimicrobial peptides, such as nlp-29 (PubMed:21575913, PubMed:22470487, PubMed:33259791). Through positively modulating the expression of epidermal antimicrobial peptides, such as nlp-29, plays a role in resistance to fungal infection and in the response to physical wounding and phorbol ester PMA treatment (PubMed:21575913, PubMed:22470487). Functions cell autonomously in the epidermis, in concert with sodium-dependent transporter snf-12, probably acting at vesicular membranes, downstream of a p38 MAPK/pmk-1 pathway.</text>
</comment>
<comment type="subunit">
    <text evidence="4">May interact with sodium-dependent transporter snf-12; the interaction is probably direct.</text>
</comment>
<comment type="subcellular location">
    <subcellularLocation>
        <location evidence="1">Cytoplasm</location>
    </subcellularLocation>
    <subcellularLocation>
        <location evidence="4">Nucleus</location>
    </subcellularLocation>
    <subcellularLocation>
        <location evidence="4">Vesicle</location>
    </subcellularLocation>
    <text evidence="1 4">Translocated into the nucleus in response to phosphorylation (By similarity). Localized to vesicles, which may be a type of endosome (PubMed:21575913).</text>
</comment>
<comment type="developmental stage">
    <text evidence="4">Expressed in the epidermis throughout development (PubMed:21575913). Also expressed in the seam cells, which are specialized epithelial cells that secrete the cuticle, as well as in the intestine, the phasmid socket cells, and the excretory duct cell, as well as cells in the vulva and the dorsal rectal cells (PubMed:21575913).</text>
</comment>
<comment type="disruption phenotype">
    <text evidence="4">RNAi-mediated knockdown almost completely abolishes induction of nlp-29 expression upon infection with Drechmeria coniospora, or upon injury, or in response to phorbol ester PMA.</text>
</comment>
<comment type="similarity">
    <text evidence="2">Belongs to the transcription factor STAT family.</text>
</comment>
<comment type="sequence caution" evidence="7">
    <conflict type="miscellaneous discrepancy">
        <sequence resource="EMBL-CDS" id="AAD45535"/>
    </conflict>
    <text>Intron retention.</text>
</comment>
<organism>
    <name type="scientific">Caenorhabditis elegans</name>
    <dbReference type="NCBI Taxonomy" id="6239"/>
    <lineage>
        <taxon>Eukaryota</taxon>
        <taxon>Metazoa</taxon>
        <taxon>Ecdysozoa</taxon>
        <taxon>Nematoda</taxon>
        <taxon>Chromadorea</taxon>
        <taxon>Rhabditida</taxon>
        <taxon>Rhabditina</taxon>
        <taxon>Rhabditomorpha</taxon>
        <taxon>Rhabditoidea</taxon>
        <taxon>Rhabditidae</taxon>
        <taxon>Peloderinae</taxon>
        <taxon>Caenorhabditis</taxon>
    </lineage>
</organism>
<accession>Q20977</accession>
<accession>B2D6L5</accession>
<accession>Q20978</accession>
<accession>Q95ZS4</accession>
<accession>Q9U9L4</accession>
<feature type="chain" id="PRO_0000234104" description="Signal transducer and activator of transcription b">
    <location>
        <begin position="1"/>
        <end position="567"/>
    </location>
</feature>
<feature type="domain" description="SH2" evidence="3">
    <location>
        <begin position="449"/>
        <end position="548"/>
    </location>
</feature>